<accession>P60651</accession>
<accession>P16936</accession>
<accession>Q2M9Q6</accession>
<keyword id="KW-0002">3D-structure</keyword>
<keyword id="KW-0378">Hydrolase</keyword>
<keyword id="KW-0464">Manganese</keyword>
<keyword id="KW-0479">Metal-binding</keyword>
<keyword id="KW-0620">Polyamine biosynthesis</keyword>
<keyword id="KW-0661">Putrescine biosynthesis</keyword>
<keyword id="KW-1185">Reference proteome</keyword>
<keyword id="KW-0745">Spermidine biosynthesis</keyword>
<name>SPEB_ECOLI</name>
<feature type="chain" id="PRO_0000173731" description="Agmatinase">
    <location>
        <begin position="1"/>
        <end position="306"/>
    </location>
</feature>
<feature type="binding site" evidence="1">
    <location>
        <position position="126"/>
    </location>
    <ligand>
        <name>Mn(2+)</name>
        <dbReference type="ChEBI" id="CHEBI:29035"/>
        <label>1</label>
    </ligand>
</feature>
<feature type="binding site" evidence="1">
    <location>
        <position position="149"/>
    </location>
    <ligand>
        <name>Mn(2+)</name>
        <dbReference type="ChEBI" id="CHEBI:29035"/>
        <label>1</label>
    </ligand>
</feature>
<feature type="binding site" evidence="1">
    <location>
        <position position="149"/>
    </location>
    <ligand>
        <name>Mn(2+)</name>
        <dbReference type="ChEBI" id="CHEBI:29035"/>
        <label>2</label>
    </ligand>
</feature>
<feature type="binding site" evidence="1">
    <location>
        <position position="151"/>
    </location>
    <ligand>
        <name>Mn(2+)</name>
        <dbReference type="ChEBI" id="CHEBI:29035"/>
        <label>2</label>
    </ligand>
</feature>
<feature type="binding site" evidence="1">
    <location>
        <position position="153"/>
    </location>
    <ligand>
        <name>Mn(2+)</name>
        <dbReference type="ChEBI" id="CHEBI:29035"/>
        <label>1</label>
    </ligand>
</feature>
<feature type="binding site" evidence="1">
    <location>
        <position position="230"/>
    </location>
    <ligand>
        <name>Mn(2+)</name>
        <dbReference type="ChEBI" id="CHEBI:29035"/>
        <label>1</label>
    </ligand>
</feature>
<feature type="binding site" evidence="1">
    <location>
        <position position="230"/>
    </location>
    <ligand>
        <name>Mn(2+)</name>
        <dbReference type="ChEBI" id="CHEBI:29035"/>
        <label>2</label>
    </ligand>
</feature>
<feature type="binding site" evidence="1">
    <location>
        <position position="232"/>
    </location>
    <ligand>
        <name>Mn(2+)</name>
        <dbReference type="ChEBI" id="CHEBI:29035"/>
        <label>2</label>
    </ligand>
</feature>
<feature type="site" description="Important for catalytic activity">
    <location>
        <position position="163"/>
    </location>
</feature>
<feature type="mutagenesis site" description="Loss of activity." evidence="3">
    <original>H</original>
    <variation>F</variation>
    <location>
        <position position="163"/>
    </location>
</feature>
<feature type="helix" evidence="5">
    <location>
        <begin position="4"/>
        <end position="6"/>
    </location>
</feature>
<feature type="strand" evidence="5">
    <location>
        <begin position="11"/>
        <end position="14"/>
    </location>
</feature>
<feature type="helix" evidence="6">
    <location>
        <begin position="19"/>
        <end position="21"/>
    </location>
</feature>
<feature type="helix" evidence="6">
    <location>
        <begin position="28"/>
        <end position="30"/>
    </location>
</feature>
<feature type="strand" evidence="6">
    <location>
        <begin position="34"/>
        <end position="39"/>
    </location>
</feature>
<feature type="helix" evidence="5">
    <location>
        <begin position="52"/>
        <end position="54"/>
    </location>
</feature>
<feature type="helix" evidence="6">
    <location>
        <begin position="55"/>
        <end position="62"/>
    </location>
</feature>
<feature type="helix" evidence="6">
    <location>
        <begin position="64"/>
        <end position="67"/>
    </location>
</feature>
<feature type="helix" evidence="6">
    <location>
        <begin position="79"/>
        <end position="82"/>
    </location>
</feature>
<feature type="strand" evidence="6">
    <location>
        <begin position="85"/>
        <end position="90"/>
    </location>
</feature>
<feature type="helix" evidence="6">
    <location>
        <begin position="92"/>
        <end position="95"/>
    </location>
</feature>
<feature type="helix" evidence="6">
    <location>
        <begin position="98"/>
        <end position="114"/>
    </location>
</feature>
<feature type="strand" evidence="6">
    <location>
        <begin position="118"/>
        <end position="122"/>
    </location>
</feature>
<feature type="helix" evidence="6">
    <location>
        <begin position="126"/>
        <end position="128"/>
    </location>
</feature>
<feature type="helix" evidence="6">
    <location>
        <begin position="129"/>
        <end position="140"/>
    </location>
</feature>
<feature type="strand" evidence="6">
    <location>
        <begin position="142"/>
        <end position="148"/>
    </location>
</feature>
<feature type="strand" evidence="5">
    <location>
        <begin position="156"/>
        <end position="158"/>
    </location>
</feature>
<feature type="helix" evidence="7">
    <location>
        <begin position="163"/>
        <end position="165"/>
    </location>
</feature>
<feature type="helix" evidence="6">
    <location>
        <begin position="166"/>
        <end position="172"/>
    </location>
</feature>
<feature type="helix" evidence="6">
    <location>
        <begin position="178"/>
        <end position="180"/>
    </location>
</feature>
<feature type="strand" evidence="6">
    <location>
        <begin position="182"/>
        <end position="185"/>
    </location>
</feature>
<feature type="strand" evidence="5">
    <location>
        <begin position="192"/>
        <end position="195"/>
    </location>
</feature>
<feature type="strand" evidence="6">
    <location>
        <begin position="197"/>
        <end position="199"/>
    </location>
</feature>
<feature type="helix" evidence="6">
    <location>
        <begin position="201"/>
        <end position="206"/>
    </location>
</feature>
<feature type="helix" evidence="6">
    <location>
        <begin position="209"/>
        <end position="220"/>
    </location>
</feature>
<feature type="strand" evidence="6">
    <location>
        <begin position="225"/>
        <end position="230"/>
    </location>
</feature>
<feature type="helix" evidence="6">
    <location>
        <begin position="231"/>
        <end position="233"/>
    </location>
</feature>
<feature type="turn" evidence="6">
    <location>
        <begin position="236"/>
        <end position="238"/>
    </location>
</feature>
<feature type="strand" evidence="6">
    <location>
        <begin position="242"/>
        <end position="244"/>
    </location>
</feature>
<feature type="helix" evidence="6">
    <location>
        <begin position="252"/>
        <end position="261"/>
    </location>
</feature>
<feature type="turn" evidence="6">
    <location>
        <begin position="262"/>
        <end position="264"/>
    </location>
</feature>
<feature type="strand" evidence="6">
    <location>
        <begin position="267"/>
        <end position="273"/>
    </location>
</feature>
<feature type="helix" evidence="6">
    <location>
        <begin position="277"/>
        <end position="279"/>
    </location>
</feature>
<feature type="helix" evidence="6">
    <location>
        <begin position="284"/>
        <end position="301"/>
    </location>
</feature>
<proteinExistence type="evidence at protein level"/>
<gene>
    <name type="primary">speB</name>
    <name type="ordered locus">b2937</name>
    <name type="ordered locus">JW2904</name>
</gene>
<evidence type="ECO:0000250" key="1"/>
<evidence type="ECO:0000269" key="2">
    <source>
    </source>
</evidence>
<evidence type="ECO:0000269" key="3">
    <source>
    </source>
</evidence>
<evidence type="ECO:0000305" key="4"/>
<evidence type="ECO:0007829" key="5">
    <source>
        <dbReference type="PDB" id="7LBA"/>
    </source>
</evidence>
<evidence type="ECO:0007829" key="6">
    <source>
        <dbReference type="PDB" id="7LOL"/>
    </source>
</evidence>
<evidence type="ECO:0007829" key="7">
    <source>
        <dbReference type="PDB" id="7LOX"/>
    </source>
</evidence>
<comment type="function">
    <text evidence="3">Catalyzes the formation of putrescine from agmatine.</text>
</comment>
<comment type="catalytic activity">
    <reaction>
        <text>agmatine + H2O = urea + putrescine</text>
        <dbReference type="Rhea" id="RHEA:13929"/>
        <dbReference type="ChEBI" id="CHEBI:15377"/>
        <dbReference type="ChEBI" id="CHEBI:16199"/>
        <dbReference type="ChEBI" id="CHEBI:58145"/>
        <dbReference type="ChEBI" id="CHEBI:326268"/>
        <dbReference type="EC" id="3.5.3.11"/>
    </reaction>
</comment>
<comment type="cofactor">
    <cofactor evidence="2">
        <name>Mn(2+)</name>
        <dbReference type="ChEBI" id="CHEBI:29035"/>
    </cofactor>
</comment>
<comment type="activity regulation">
    <text>The expression of auh activity is antagonistically regulated by cyclic AMP and agmatine. In the presence of the cAMP receptor protein, cAMP represses the expression of AUH, while agmatine induces it.</text>
</comment>
<comment type="pathway">
    <text>Amine and polyamine biosynthesis; putrescine biosynthesis via agmatine pathway; putrescine from agmatine: step 1/1.</text>
</comment>
<comment type="similarity">
    <text evidence="4">Belongs to the arginase family. Agmatinase subfamily.</text>
</comment>
<organism>
    <name type="scientific">Escherichia coli (strain K12)</name>
    <dbReference type="NCBI Taxonomy" id="83333"/>
    <lineage>
        <taxon>Bacteria</taxon>
        <taxon>Pseudomonadati</taxon>
        <taxon>Pseudomonadota</taxon>
        <taxon>Gammaproteobacteria</taxon>
        <taxon>Enterobacterales</taxon>
        <taxon>Enterobacteriaceae</taxon>
        <taxon>Escherichia</taxon>
    </lineage>
</organism>
<reference key="1">
    <citation type="journal article" date="1990" name="J. Bacteriol.">
        <title>Analysis and sequence of the speB gene encoding agmatine ureohydrolase, a putrescine biosynthetic enzyme in Escherichia coli.</title>
        <authorList>
            <person name="Szumanski M.B.W."/>
            <person name="Boyle S.M."/>
        </authorList>
    </citation>
    <scope>NUCLEOTIDE SEQUENCE [GENOMIC DNA]</scope>
</reference>
<reference key="2">
    <citation type="journal article" date="1997" name="Science">
        <title>The complete genome sequence of Escherichia coli K-12.</title>
        <authorList>
            <person name="Blattner F.R."/>
            <person name="Plunkett G. III"/>
            <person name="Bloch C.A."/>
            <person name="Perna N.T."/>
            <person name="Burland V."/>
            <person name="Riley M."/>
            <person name="Collado-Vides J."/>
            <person name="Glasner J.D."/>
            <person name="Rode C.K."/>
            <person name="Mayhew G.F."/>
            <person name="Gregor J."/>
            <person name="Davis N.W."/>
            <person name="Kirkpatrick H.A."/>
            <person name="Goeden M.A."/>
            <person name="Rose D.J."/>
            <person name="Mau B."/>
            <person name="Shao Y."/>
        </authorList>
    </citation>
    <scope>NUCLEOTIDE SEQUENCE [LARGE SCALE GENOMIC DNA]</scope>
    <source>
        <strain>K12 / MG1655 / ATCC 47076</strain>
    </source>
</reference>
<reference key="3">
    <citation type="journal article" date="2006" name="Mol. Syst. Biol.">
        <title>Highly accurate genome sequences of Escherichia coli K-12 strains MG1655 and W3110.</title>
        <authorList>
            <person name="Hayashi K."/>
            <person name="Morooka N."/>
            <person name="Yamamoto Y."/>
            <person name="Fujita K."/>
            <person name="Isono K."/>
            <person name="Choi S."/>
            <person name="Ohtsubo E."/>
            <person name="Baba T."/>
            <person name="Wanner B.L."/>
            <person name="Mori H."/>
            <person name="Horiuchi T."/>
        </authorList>
    </citation>
    <scope>NUCLEOTIDE SEQUENCE [LARGE SCALE GENOMIC DNA]</scope>
    <source>
        <strain>K12 / W3110 / ATCC 27325 / DSM 5911</strain>
    </source>
</reference>
<reference key="4">
    <citation type="journal article" date="1990" name="J. Bacteriol.">
        <title>Nucleotide sequence and analysis of the speA gene encoding biosynthetic arginine decarboxylase in Escherichia coli.</title>
        <authorList>
            <person name="Moore R.C."/>
            <person name="Boyle S.M."/>
        </authorList>
    </citation>
    <scope>NUCLEOTIDE SEQUENCE [GENOMIC DNA] OF 1-45</scope>
</reference>
<reference key="5">
    <citation type="journal article" date="1999" name="Biochem. Biophys. Res. Commun.">
        <title>Manganese is essential for catalytic activity of Escherichia coli agmatinase.</title>
        <authorList>
            <person name="Carvajal N."/>
            <person name="Lopez V."/>
            <person name="Salas M."/>
            <person name="Uribe E."/>
            <person name="Herrera P."/>
            <person name="Cerpa J."/>
        </authorList>
    </citation>
    <scope>COFACTOR</scope>
</reference>
<reference key="6">
    <citation type="journal article" date="1999" name="Biochem. Biophys. Res. Commun.">
        <title>Evidence that histidine-163 is critical for catalytic activity, but not for substrate binding to Escherichia coli agmatinase.</title>
        <authorList>
            <person name="Carvajal N."/>
            <person name="Olate J."/>
            <person name="Salas M."/>
            <person name="Lopez V."/>
            <person name="Cerpa J."/>
            <person name="Herrera P."/>
            <person name="Uribe E."/>
        </authorList>
    </citation>
    <scope>FUNCTION</scope>
    <scope>MUTAGENESIS OF HIS-163</scope>
</reference>
<reference key="7">
    <citation type="journal article" date="1992" name="J. Bacteriol.">
        <title>Influence of cyclic AMP, agmatine, and a novel protein encoded by a flanking gene on speB (agmatine ureohydrolase) in Escherichia coli.</title>
        <authorList>
            <person name="Szumanski M.B.W."/>
            <person name="Boyle S.M."/>
        </authorList>
    </citation>
    <scope>REGULATION</scope>
</reference>
<dbReference type="EC" id="3.5.3.11"/>
<dbReference type="EMBL" id="M32363">
    <property type="protein sequence ID" value="AAA83909.1"/>
    <property type="molecule type" value="Genomic_DNA"/>
</dbReference>
<dbReference type="EMBL" id="U28377">
    <property type="protein sequence ID" value="AAA69104.1"/>
    <property type="molecule type" value="Genomic_DNA"/>
</dbReference>
<dbReference type="EMBL" id="U00096">
    <property type="protein sequence ID" value="AAC75974.1"/>
    <property type="molecule type" value="Genomic_DNA"/>
</dbReference>
<dbReference type="EMBL" id="AP009048">
    <property type="protein sequence ID" value="BAE77000.1"/>
    <property type="molecule type" value="Genomic_DNA"/>
</dbReference>
<dbReference type="EMBL" id="M31770">
    <property type="protein sequence ID" value="AAA24647.1"/>
    <property type="molecule type" value="Genomic_DNA"/>
</dbReference>
<dbReference type="PIR" id="C42604">
    <property type="entry name" value="C42604"/>
</dbReference>
<dbReference type="PIR" id="G85950">
    <property type="entry name" value="G85950"/>
</dbReference>
<dbReference type="RefSeq" id="NP_417412.1">
    <property type="nucleotide sequence ID" value="NC_000913.3"/>
</dbReference>
<dbReference type="RefSeq" id="WP_000105566.1">
    <property type="nucleotide sequence ID" value="NZ_STEB01000001.1"/>
</dbReference>
<dbReference type="PDB" id="7LBA">
    <property type="method" value="X-ray"/>
    <property type="resolution" value="2.20 A"/>
    <property type="chains" value="A/B/C/D/E/F/G/H/I/J/K/L/M/N/O/P/Q/R=1-306"/>
</dbReference>
<dbReference type="PDB" id="7LOL">
    <property type="method" value="X-ray"/>
    <property type="resolution" value="1.80 A"/>
    <property type="chains" value="A=1-306"/>
</dbReference>
<dbReference type="PDB" id="7LOX">
    <property type="method" value="X-ray"/>
    <property type="resolution" value="3.20 A"/>
    <property type="chains" value="A/B/C=1-306"/>
</dbReference>
<dbReference type="PDBsum" id="7LBA"/>
<dbReference type="PDBsum" id="7LOL"/>
<dbReference type="PDBsum" id="7LOX"/>
<dbReference type="SMR" id="P60651"/>
<dbReference type="BioGRID" id="4260910">
    <property type="interactions" value="47"/>
</dbReference>
<dbReference type="DIP" id="DIP-10906N"/>
<dbReference type="FunCoup" id="P60651">
    <property type="interactions" value="676"/>
</dbReference>
<dbReference type="IntAct" id="P60651">
    <property type="interactions" value="7"/>
</dbReference>
<dbReference type="STRING" id="511145.b2937"/>
<dbReference type="jPOST" id="P60651"/>
<dbReference type="PaxDb" id="511145-b2937"/>
<dbReference type="EnsemblBacteria" id="AAC75974">
    <property type="protein sequence ID" value="AAC75974"/>
    <property type="gene ID" value="b2937"/>
</dbReference>
<dbReference type="GeneID" id="89517749"/>
<dbReference type="GeneID" id="947715"/>
<dbReference type="KEGG" id="ecj:JW2904"/>
<dbReference type="KEGG" id="eco:b2937"/>
<dbReference type="KEGG" id="ecoc:C3026_16080"/>
<dbReference type="PATRIC" id="fig|1411691.4.peg.3796"/>
<dbReference type="EchoBASE" id="EB0953"/>
<dbReference type="eggNOG" id="COG0010">
    <property type="taxonomic scope" value="Bacteria"/>
</dbReference>
<dbReference type="HOGENOM" id="CLU_039478_0_0_6"/>
<dbReference type="InParanoid" id="P60651"/>
<dbReference type="OMA" id="YELTTIM"/>
<dbReference type="OrthoDB" id="9789727at2"/>
<dbReference type="PhylomeDB" id="P60651"/>
<dbReference type="BioCyc" id="EcoCyc:AGMATIN-MONOMER"/>
<dbReference type="BioCyc" id="MetaCyc:AGMATIN-MONOMER"/>
<dbReference type="UniPathway" id="UPA00534">
    <property type="reaction ID" value="UER00287"/>
</dbReference>
<dbReference type="PHI-base" id="PHI:9150"/>
<dbReference type="PRO" id="PR:P60651"/>
<dbReference type="Proteomes" id="UP000000625">
    <property type="component" value="Chromosome"/>
</dbReference>
<dbReference type="GO" id="GO:0005829">
    <property type="term" value="C:cytosol"/>
    <property type="evidence" value="ECO:0000314"/>
    <property type="project" value="EcoCyc"/>
</dbReference>
<dbReference type="GO" id="GO:0008783">
    <property type="term" value="F:agmatinase activity"/>
    <property type="evidence" value="ECO:0000314"/>
    <property type="project" value="EcoCyc"/>
</dbReference>
<dbReference type="GO" id="GO:0042802">
    <property type="term" value="F:identical protein binding"/>
    <property type="evidence" value="ECO:0000314"/>
    <property type="project" value="EcoCyc"/>
</dbReference>
<dbReference type="GO" id="GO:0030145">
    <property type="term" value="F:manganese ion binding"/>
    <property type="evidence" value="ECO:0000314"/>
    <property type="project" value="EcoCyc"/>
</dbReference>
<dbReference type="GO" id="GO:0033389">
    <property type="term" value="P:putrescine biosynthetic process from arginine, via agmatine"/>
    <property type="evidence" value="ECO:0000315"/>
    <property type="project" value="EcoCyc"/>
</dbReference>
<dbReference type="GO" id="GO:0008295">
    <property type="term" value="P:spermidine biosynthetic process"/>
    <property type="evidence" value="ECO:0007669"/>
    <property type="project" value="UniProtKB-UniRule"/>
</dbReference>
<dbReference type="CDD" id="cd11592">
    <property type="entry name" value="Agmatinase_PAH"/>
    <property type="match status" value="1"/>
</dbReference>
<dbReference type="FunFam" id="3.40.800.10:FF:000001">
    <property type="entry name" value="Agmatinase"/>
    <property type="match status" value="1"/>
</dbReference>
<dbReference type="Gene3D" id="3.40.800.10">
    <property type="entry name" value="Ureohydrolase domain"/>
    <property type="match status" value="1"/>
</dbReference>
<dbReference type="HAMAP" id="MF_01418">
    <property type="entry name" value="SpeB"/>
    <property type="match status" value="1"/>
</dbReference>
<dbReference type="InterPro" id="IPR023694">
    <property type="entry name" value="Agmatinase"/>
</dbReference>
<dbReference type="InterPro" id="IPR005925">
    <property type="entry name" value="Agmatinase-rel"/>
</dbReference>
<dbReference type="InterPro" id="IPR006035">
    <property type="entry name" value="Ureohydrolase"/>
</dbReference>
<dbReference type="InterPro" id="IPR023696">
    <property type="entry name" value="Ureohydrolase_dom_sf"/>
</dbReference>
<dbReference type="InterPro" id="IPR020855">
    <property type="entry name" value="Ureohydrolase_Mn_BS"/>
</dbReference>
<dbReference type="NCBIfam" id="TIGR01230">
    <property type="entry name" value="agmatinase"/>
    <property type="match status" value="1"/>
</dbReference>
<dbReference type="NCBIfam" id="NF002564">
    <property type="entry name" value="PRK02190.1"/>
    <property type="match status" value="1"/>
</dbReference>
<dbReference type="PANTHER" id="PTHR11358">
    <property type="entry name" value="ARGINASE/AGMATINASE"/>
    <property type="match status" value="1"/>
</dbReference>
<dbReference type="PANTHER" id="PTHR11358:SF26">
    <property type="entry name" value="GUANIDINO ACID HYDROLASE, MITOCHONDRIAL"/>
    <property type="match status" value="1"/>
</dbReference>
<dbReference type="Pfam" id="PF00491">
    <property type="entry name" value="Arginase"/>
    <property type="match status" value="1"/>
</dbReference>
<dbReference type="PIRSF" id="PIRSF036979">
    <property type="entry name" value="Arginase"/>
    <property type="match status" value="1"/>
</dbReference>
<dbReference type="SUPFAM" id="SSF52768">
    <property type="entry name" value="Arginase/deacetylase"/>
    <property type="match status" value="1"/>
</dbReference>
<dbReference type="PROSITE" id="PS01053">
    <property type="entry name" value="ARGINASE_1"/>
    <property type="match status" value="1"/>
</dbReference>
<dbReference type="PROSITE" id="PS51409">
    <property type="entry name" value="ARGINASE_2"/>
    <property type="match status" value="1"/>
</dbReference>
<protein>
    <recommendedName>
        <fullName>Agmatinase</fullName>
        <ecNumber>3.5.3.11</ecNumber>
    </recommendedName>
    <alternativeName>
        <fullName>Agmatine ureohydrolase</fullName>
        <shortName>AUH</shortName>
    </alternativeName>
</protein>
<sequence>MSTLGHQYDNSLVSNAFGFLRLPMNFQPYDSDADWVITGVPFDMATSGRAGGRHGPAAIRQVSTNLAWEHNRFPWNFDMRERLNVVDCGDLVYAFGDAREMSEKLQAHAEKLLAAGKRMLSFGGDHFVTLPLLRAHAKHFGKMALVHFDAHTDTYANGCEFDHGTMFYTAPKEGLIDPNHSVQIGIRTEFDKDNGFTVLDACQVNDRSVDDVIAQVKQIVGDMPVYLTFDIDCLDPAFAPGTGTPVIGGLTSDRAIKLVRGLKDLNIVGMDVVEVAPAYDQSEITALAAATLALEMLYIQAAKKGE</sequence>